<proteinExistence type="inferred from homology"/>
<organism>
    <name type="scientific">Helicobacter pylori (strain HPAG1)</name>
    <dbReference type="NCBI Taxonomy" id="357544"/>
    <lineage>
        <taxon>Bacteria</taxon>
        <taxon>Pseudomonadati</taxon>
        <taxon>Campylobacterota</taxon>
        <taxon>Epsilonproteobacteria</taxon>
        <taxon>Campylobacterales</taxon>
        <taxon>Helicobacteraceae</taxon>
        <taxon>Helicobacter</taxon>
    </lineage>
</organism>
<keyword id="KW-0963">Cytoplasm</keyword>
<keyword id="KW-0269">Exonuclease</keyword>
<keyword id="KW-0378">Hydrolase</keyword>
<keyword id="KW-0540">Nuclease</keyword>
<evidence type="ECO:0000255" key="1">
    <source>
        <dbReference type="HAMAP-Rule" id="MF_00337"/>
    </source>
</evidence>
<evidence type="ECO:0000256" key="2">
    <source>
        <dbReference type="SAM" id="MobiDB-lite"/>
    </source>
</evidence>
<reference key="1">
    <citation type="journal article" date="2006" name="Proc. Natl. Acad. Sci. U.S.A.">
        <title>The complete genome sequence of a chronic atrophic gastritis Helicobacter pylori strain: evolution during disease progression.</title>
        <authorList>
            <person name="Oh J.D."/>
            <person name="Kling-Baeckhed H."/>
            <person name="Giannakis M."/>
            <person name="Xu J."/>
            <person name="Fulton R.S."/>
            <person name="Fulton L.A."/>
            <person name="Cordum H.S."/>
            <person name="Wang C."/>
            <person name="Elliott G."/>
            <person name="Edwards J."/>
            <person name="Mardis E.R."/>
            <person name="Engstrand L.G."/>
            <person name="Gordon J.I."/>
        </authorList>
    </citation>
    <scope>NUCLEOTIDE SEQUENCE [LARGE SCALE GENOMIC DNA]</scope>
    <source>
        <strain>HPAG1</strain>
    </source>
</reference>
<accession>Q1CRC4</accession>
<gene>
    <name evidence="1" type="primary">xseB</name>
    <name type="ordered locus">HPAG1_1431</name>
</gene>
<sequence>MQDELFETEKAPQKNTKNAKNAPKKSFEEHVHSLEQAIDRLNDPNLSLKDGMDLYKTAMQELVLAQKLLENAYLEYEKLQTLDKKA</sequence>
<feature type="chain" id="PRO_0000303713" description="Exodeoxyribonuclease 7 small subunit">
    <location>
        <begin position="1"/>
        <end position="86"/>
    </location>
</feature>
<feature type="region of interest" description="Disordered" evidence="2">
    <location>
        <begin position="1"/>
        <end position="26"/>
    </location>
</feature>
<dbReference type="EC" id="3.1.11.6" evidence="1"/>
<dbReference type="EMBL" id="CP000241">
    <property type="protein sequence ID" value="ABF85498.1"/>
    <property type="molecule type" value="Genomic_DNA"/>
</dbReference>
<dbReference type="RefSeq" id="WP_001150294.1">
    <property type="nucleotide sequence ID" value="NC_008086.1"/>
</dbReference>
<dbReference type="SMR" id="Q1CRC4"/>
<dbReference type="KEGG" id="hpa:HPAG1_1431"/>
<dbReference type="HOGENOM" id="CLU_145918_6_0_7"/>
<dbReference type="GO" id="GO:0005737">
    <property type="term" value="C:cytoplasm"/>
    <property type="evidence" value="ECO:0007669"/>
    <property type="project" value="UniProtKB-SubCell"/>
</dbReference>
<dbReference type="GO" id="GO:0009318">
    <property type="term" value="C:exodeoxyribonuclease VII complex"/>
    <property type="evidence" value="ECO:0007669"/>
    <property type="project" value="InterPro"/>
</dbReference>
<dbReference type="GO" id="GO:0008855">
    <property type="term" value="F:exodeoxyribonuclease VII activity"/>
    <property type="evidence" value="ECO:0007669"/>
    <property type="project" value="UniProtKB-UniRule"/>
</dbReference>
<dbReference type="GO" id="GO:0006308">
    <property type="term" value="P:DNA catabolic process"/>
    <property type="evidence" value="ECO:0007669"/>
    <property type="project" value="UniProtKB-UniRule"/>
</dbReference>
<dbReference type="Gene3D" id="1.10.287.1040">
    <property type="entry name" value="Exonuclease VII, small subunit"/>
    <property type="match status" value="1"/>
</dbReference>
<dbReference type="HAMAP" id="MF_00337">
    <property type="entry name" value="Exonuc_7_S"/>
    <property type="match status" value="1"/>
</dbReference>
<dbReference type="InterPro" id="IPR003761">
    <property type="entry name" value="Exonuc_VII_S"/>
</dbReference>
<dbReference type="InterPro" id="IPR037004">
    <property type="entry name" value="Exonuc_VII_ssu_sf"/>
</dbReference>
<dbReference type="NCBIfam" id="NF010668">
    <property type="entry name" value="PRK14065.1"/>
    <property type="match status" value="1"/>
</dbReference>
<dbReference type="NCBIfam" id="TIGR01280">
    <property type="entry name" value="xseB"/>
    <property type="match status" value="1"/>
</dbReference>
<dbReference type="Pfam" id="PF02609">
    <property type="entry name" value="Exonuc_VII_S"/>
    <property type="match status" value="1"/>
</dbReference>
<dbReference type="SUPFAM" id="SSF116842">
    <property type="entry name" value="XseB-like"/>
    <property type="match status" value="1"/>
</dbReference>
<name>EX7S_HELPH</name>
<comment type="function">
    <text evidence="1">Bidirectionally degrades single-stranded DNA into large acid-insoluble oligonucleotides, which are then degraded further into small acid-soluble oligonucleotides.</text>
</comment>
<comment type="catalytic activity">
    <reaction evidence="1">
        <text>Exonucleolytic cleavage in either 5'- to 3'- or 3'- to 5'-direction to yield nucleoside 5'-phosphates.</text>
        <dbReference type="EC" id="3.1.11.6"/>
    </reaction>
</comment>
<comment type="subunit">
    <text evidence="1">Heterooligomer composed of large and small subunits.</text>
</comment>
<comment type="subcellular location">
    <subcellularLocation>
        <location evidence="1">Cytoplasm</location>
    </subcellularLocation>
</comment>
<comment type="similarity">
    <text evidence="1">Belongs to the XseB family.</text>
</comment>
<protein>
    <recommendedName>
        <fullName evidence="1">Exodeoxyribonuclease 7 small subunit</fullName>
        <ecNumber evidence="1">3.1.11.6</ecNumber>
    </recommendedName>
    <alternativeName>
        <fullName evidence="1">Exodeoxyribonuclease VII small subunit</fullName>
        <shortName evidence="1">Exonuclease VII small subunit</shortName>
    </alternativeName>
</protein>